<comment type="function">
    <text evidence="2">RNA-directed RNA polymerase that catalyzes the transcription of viral mRNAs, their capping and polyadenylation. The template is composed of the viral RNA tightly encapsidated by the nucleoprotein (N). The viral polymerase binds to the genomic RNA at the 3' leader promoter, and transcribes subsequently all viral mRNAs with a decreasing efficiency. The first gene is the most transcribed, and the last the least transcribed. The viral phosphoprotein acts as a processivity factor. Capping is concomitant with initiation of mRNA transcription. Indeed, a GDP polyribonucleotidyl transferase (PRNTase) adds the cap structure when the nascent RNA chain length has reached few nucleotides. Ribose 2'-O methylation of viral mRNA cap precedes and facilitates subsequent guanine-N-7 methylation, both activities being carried by the viral polymerase. Polyadenylation of mRNAs occur by a stuttering mechanism at a slipery stop site present at the end viral genes. After finishing transcription of a mRNA, the polymerase can resume transcription of the downstream gene.</text>
</comment>
<comment type="function">
    <text evidence="2">RNA-directed RNA polymerase that catalyzes the replication of viral genomic RNA. The template is composed of the viral RNA tightly encapsidated by the nucleoprotein (N). The replicase mode is dependent on intracellular N protein concentration. In this mode, the polymerase replicates the whole viral genome without recognizing transcriptional signals, and the replicated genome is not caped or polyadenylated.</text>
</comment>
<comment type="catalytic activity">
    <reaction evidence="5">
        <text>RNA(n) + a ribonucleoside 5'-triphosphate = RNA(n+1) + diphosphate</text>
        <dbReference type="Rhea" id="RHEA:21248"/>
        <dbReference type="Rhea" id="RHEA-COMP:14527"/>
        <dbReference type="Rhea" id="RHEA-COMP:17342"/>
        <dbReference type="ChEBI" id="CHEBI:33019"/>
        <dbReference type="ChEBI" id="CHEBI:61557"/>
        <dbReference type="ChEBI" id="CHEBI:140395"/>
        <dbReference type="EC" id="2.7.7.48"/>
    </reaction>
</comment>
<comment type="catalytic activity">
    <reaction evidence="2">
        <text>a 5'-end (5'-triphosphoguanosine)-adenylyl-adenylyl-cytidylyl-adenosine in mRNA + 2 S-adenosyl-L-methionine = a 5'-end (N(7)-methyl 5'-triphosphoguanosine)-(2'-O-methyladenylyl)-adenylyl-cytidylyl-adenosine in mRNA + 2 S-adenosyl-L-homocysteine + H(+)</text>
        <dbReference type="Rhea" id="RHEA:65376"/>
        <dbReference type="Rhea" id="RHEA-COMP:16797"/>
        <dbReference type="Rhea" id="RHEA-COMP:16798"/>
        <dbReference type="ChEBI" id="CHEBI:15378"/>
        <dbReference type="ChEBI" id="CHEBI:57856"/>
        <dbReference type="ChEBI" id="CHEBI:59789"/>
        <dbReference type="ChEBI" id="CHEBI:156483"/>
        <dbReference type="ChEBI" id="CHEBI:156484"/>
        <dbReference type="EC" id="2.1.1.375"/>
    </reaction>
</comment>
<comment type="catalytic activity">
    <reaction evidence="2">
        <text>a 5'-end (5'-triphosphoguanosine)-adenylyl-adenylyl-cytidylyl-adenosine in mRNA + S-adenosyl-L-methionine = a 5'-end (5'-triphosphoguanosine)-(2'-O-methyladenylyl)-adenylyl-cytidylyl-adenosine in mRNA + S-adenosyl-L-homocysteine + H(+)</text>
        <dbReference type="Rhea" id="RHEA:65380"/>
        <dbReference type="Rhea" id="RHEA-COMP:16797"/>
        <dbReference type="Rhea" id="RHEA-COMP:16801"/>
        <dbReference type="ChEBI" id="CHEBI:15378"/>
        <dbReference type="ChEBI" id="CHEBI:57856"/>
        <dbReference type="ChEBI" id="CHEBI:59789"/>
        <dbReference type="ChEBI" id="CHEBI:156482"/>
        <dbReference type="ChEBI" id="CHEBI:156484"/>
    </reaction>
</comment>
<comment type="catalytic activity">
    <reaction evidence="3">
        <text>a 5'-end triphospho-adenylyl-adenylyl-cytidylyl-adenosine in mRNA + GDP + H(+) = a 5'-end (5'-triphosphoguanosine)-adenylyl-adenylyl-cytidylyl-adenosine in mRNA + diphosphate</text>
        <dbReference type="Rhea" id="RHEA:65436"/>
        <dbReference type="Rhea" id="RHEA-COMP:16797"/>
        <dbReference type="Rhea" id="RHEA-COMP:16799"/>
        <dbReference type="ChEBI" id="CHEBI:15378"/>
        <dbReference type="ChEBI" id="CHEBI:33019"/>
        <dbReference type="ChEBI" id="CHEBI:58189"/>
        <dbReference type="ChEBI" id="CHEBI:156484"/>
        <dbReference type="ChEBI" id="CHEBI:156503"/>
        <dbReference type="EC" id="2.7.7.88"/>
    </reaction>
</comment>
<comment type="catalytic activity">
    <reaction evidence="2">
        <text>a 5'-end (5'-triphosphoguanosine)-(2'-O-methyladenylyl)-adenylyl-cytidylyl-adenosine in mRNA + S-adenosyl-L-methionine = a 5'-end (N(7)-methyl 5'-triphosphoguanosine)-(2'-O-methyladenylyl)-adenylyl-cytidylyl-adenosine in mRNA + S-adenosyl-L-homocysteine</text>
        <dbReference type="Rhea" id="RHEA:65440"/>
        <dbReference type="Rhea" id="RHEA-COMP:16798"/>
        <dbReference type="Rhea" id="RHEA-COMP:16801"/>
        <dbReference type="ChEBI" id="CHEBI:57856"/>
        <dbReference type="ChEBI" id="CHEBI:59789"/>
        <dbReference type="ChEBI" id="CHEBI:156482"/>
        <dbReference type="ChEBI" id="CHEBI:156483"/>
    </reaction>
</comment>
<comment type="catalytic activity">
    <reaction evidence="3">
        <text>GTP + H2O = GDP + phosphate + H(+)</text>
        <dbReference type="Rhea" id="RHEA:19669"/>
        <dbReference type="ChEBI" id="CHEBI:15377"/>
        <dbReference type="ChEBI" id="CHEBI:15378"/>
        <dbReference type="ChEBI" id="CHEBI:37565"/>
        <dbReference type="ChEBI" id="CHEBI:43474"/>
        <dbReference type="ChEBI" id="CHEBI:58189"/>
    </reaction>
</comment>
<comment type="subunit">
    <text evidence="2">May form homodimer. Interacts with the P protein.</text>
</comment>
<comment type="subcellular location">
    <subcellularLocation>
        <location evidence="2">Virion</location>
    </subcellularLocation>
    <subcellularLocation>
        <location evidence="2">Host cytoplasm</location>
    </subcellularLocation>
    <text evidence="2">L and P are packaged asymmetrically towards the blunt end of the virus.</text>
</comment>
<comment type="similarity">
    <text evidence="8">Belongs to the rhabdoviruses protein L family.</text>
</comment>
<evidence type="ECO:0000250" key="1"/>
<evidence type="ECO:0000250" key="2">
    <source>
        <dbReference type="UniProtKB" id="P03523"/>
    </source>
</evidence>
<evidence type="ECO:0000250" key="3">
    <source>
        <dbReference type="UniProtKB" id="P28887"/>
    </source>
</evidence>
<evidence type="ECO:0000255" key="4"/>
<evidence type="ECO:0000255" key="5">
    <source>
        <dbReference type="PROSITE-ProRule" id="PRU00539"/>
    </source>
</evidence>
<evidence type="ECO:0000255" key="6">
    <source>
        <dbReference type="PROSITE-ProRule" id="PRU00923"/>
    </source>
</evidence>
<evidence type="ECO:0000269" key="7">
    <source>
    </source>
</evidence>
<evidence type="ECO:0000305" key="8"/>
<evidence type="ECO:0007829" key="9">
    <source>
        <dbReference type="PDB" id="6UEB"/>
    </source>
</evidence>
<name>L_RABVS</name>
<accession>P16289</accession>
<accession>A3F5M4</accession>
<accession>A3F5R9</accession>
<accession>Q6HA95</accession>
<gene>
    <name type="primary">L</name>
</gene>
<proteinExistence type="evidence at protein level"/>
<organism>
    <name type="scientific">Rabies virus (strain SAD B19)</name>
    <name type="common">RABV</name>
    <dbReference type="NCBI Taxonomy" id="11300"/>
    <lineage>
        <taxon>Viruses</taxon>
        <taxon>Riboviria</taxon>
        <taxon>Orthornavirae</taxon>
        <taxon>Negarnaviricota</taxon>
        <taxon>Haploviricotina</taxon>
        <taxon>Monjiviricetes</taxon>
        <taxon>Mononegavirales</taxon>
        <taxon>Rhabdoviridae</taxon>
        <taxon>Alpharhabdovirinae</taxon>
        <taxon>Lyssavirus</taxon>
        <taxon>Lyssavirus rabies</taxon>
    </lineage>
</organism>
<protein>
    <recommendedName>
        <fullName>Large structural protein</fullName>
        <shortName>Protein L</shortName>
    </recommendedName>
    <alternativeName>
        <fullName>Replicase</fullName>
    </alternativeName>
    <alternativeName>
        <fullName>Transcriptase</fullName>
    </alternativeName>
    <domain>
        <recommendedName>
            <fullName>RNA-directed RNA polymerase</fullName>
            <ecNumber evidence="3">2.7.7.48</ecNumber>
        </recommendedName>
    </domain>
    <domain>
        <recommendedName>
            <fullName evidence="2">GTP phosphohydrolase</fullName>
            <ecNumber evidence="2">3.6.1.-</ecNumber>
        </recommendedName>
    </domain>
    <domain>
        <recommendedName>
            <fullName evidence="8">GDP polyribonucleotidyltransferase</fullName>
            <ecNumber evidence="2">2.7.7.88</ecNumber>
        </recommendedName>
        <alternativeName>
            <fullName evidence="8">PRNTase</fullName>
        </alternativeName>
    </domain>
    <domain>
        <recommendedName>
            <fullName evidence="8">mRNA cap methyltransferase</fullName>
            <ecNumber evidence="2">2.1.1.375</ecNumber>
        </recommendedName>
        <alternativeName>
            <fullName evidence="2">mRNA (guanine-N(7)-)-methyltransferase</fullName>
            <shortName evidence="2">G-N7-MTase</shortName>
        </alternativeName>
        <alternativeName>
            <fullName evidence="2">mRNA (nucleoside-2'-O-)-methyltransferase</fullName>
            <shortName evidence="2">N1-2'-O-MTase</shortName>
        </alternativeName>
    </domain>
</protein>
<dbReference type="EC" id="2.7.7.48" evidence="3"/>
<dbReference type="EC" id="3.6.1.-" evidence="2"/>
<dbReference type="EC" id="2.7.7.88" evidence="2"/>
<dbReference type="EC" id="2.1.1.375" evidence="2"/>
<dbReference type="EMBL" id="M31046">
    <property type="protein sequence ID" value="AAA47203.1"/>
    <property type="molecule type" value="Genomic_RNA"/>
</dbReference>
<dbReference type="EMBL" id="AF499686">
    <property type="protein sequence ID" value="AAT48626.1"/>
    <property type="molecule type" value="Genomic_RNA"/>
</dbReference>
<dbReference type="EMBL" id="EF206708">
    <property type="protein sequence ID" value="ABN11300.1"/>
    <property type="molecule type" value="Genomic_RNA"/>
</dbReference>
<dbReference type="EMBL" id="EF206709">
    <property type="protein sequence ID" value="ABN11305.1"/>
    <property type="molecule type" value="Genomic_RNA"/>
</dbReference>
<dbReference type="EMBL" id="EF206710">
    <property type="protein sequence ID" value="ABN11310.1"/>
    <property type="molecule type" value="Genomic_RNA"/>
</dbReference>
<dbReference type="EMBL" id="EF206711">
    <property type="protein sequence ID" value="ABN11315.1"/>
    <property type="molecule type" value="Genomic_RNA"/>
</dbReference>
<dbReference type="EMBL" id="EF206712">
    <property type="protein sequence ID" value="ABN11320.1"/>
    <property type="molecule type" value="Genomic_RNA"/>
</dbReference>
<dbReference type="EMBL" id="EF206713">
    <property type="protein sequence ID" value="ABN11325.1"/>
    <property type="molecule type" value="Genomic_RNA"/>
</dbReference>
<dbReference type="EMBL" id="EF206714">
    <property type="protein sequence ID" value="ABN11330.1"/>
    <property type="molecule type" value="Genomic_RNA"/>
</dbReference>
<dbReference type="EMBL" id="EF206715">
    <property type="protein sequence ID" value="ABN11335.1"/>
    <property type="molecule type" value="Genomic_RNA"/>
</dbReference>
<dbReference type="EMBL" id="EF206716">
    <property type="protein sequence ID" value="ABN11340.1"/>
    <property type="molecule type" value="Genomic_RNA"/>
</dbReference>
<dbReference type="EMBL" id="EF206717">
    <property type="protein sequence ID" value="ABN11345.1"/>
    <property type="molecule type" value="Genomic_RNA"/>
</dbReference>
<dbReference type="EMBL" id="EF206718">
    <property type="protein sequence ID" value="ABN11350.1"/>
    <property type="molecule type" value="Genomic_RNA"/>
</dbReference>
<dbReference type="EMBL" id="EF206719">
    <property type="protein sequence ID" value="ABN11355.1"/>
    <property type="molecule type" value="Genomic_RNA"/>
</dbReference>
<dbReference type="EMBL" id="EF206720">
    <property type="protein sequence ID" value="ABN11360.1"/>
    <property type="molecule type" value="Genomic_RNA"/>
</dbReference>
<dbReference type="PIR" id="E34746">
    <property type="entry name" value="ZLVNSB"/>
</dbReference>
<dbReference type="PDB" id="6UEB">
    <property type="method" value="EM"/>
    <property type="resolution" value="3.30 A"/>
    <property type="chains" value="A=1-2127"/>
</dbReference>
<dbReference type="PDBsum" id="6UEB"/>
<dbReference type="EMDB" id="EMD-20753"/>
<dbReference type="SMR" id="P16289"/>
<dbReference type="BRENDA" id="2.1.1.375">
    <property type="organism ID" value="14818"/>
</dbReference>
<dbReference type="Proteomes" id="UP000006363">
    <property type="component" value="Genome"/>
</dbReference>
<dbReference type="Proteomes" id="UP000007308">
    <property type="component" value="Genome"/>
</dbReference>
<dbReference type="Proteomes" id="UP000100286">
    <property type="component" value="Genome"/>
</dbReference>
<dbReference type="Proteomes" id="UP000107382">
    <property type="component" value="Genome"/>
</dbReference>
<dbReference type="Proteomes" id="UP000115894">
    <property type="component" value="Genome"/>
</dbReference>
<dbReference type="Proteomes" id="UP000118099">
    <property type="component" value="Genome"/>
</dbReference>
<dbReference type="Proteomes" id="UP000123862">
    <property type="component" value="Genome"/>
</dbReference>
<dbReference type="Proteomes" id="UP000132522">
    <property type="component" value="Genome"/>
</dbReference>
<dbReference type="Proteomes" id="UP000133682">
    <property type="component" value="Genome"/>
</dbReference>
<dbReference type="Proteomes" id="UP000142143">
    <property type="component" value="Genome"/>
</dbReference>
<dbReference type="Proteomes" id="UP000151156">
    <property type="component" value="Genome"/>
</dbReference>
<dbReference type="Proteomes" id="UP000167748">
    <property type="component" value="Genome"/>
</dbReference>
<dbReference type="Proteomes" id="UP000172072">
    <property type="component" value="Genome"/>
</dbReference>
<dbReference type="Proteomes" id="UP000174835">
    <property type="component" value="Genome"/>
</dbReference>
<dbReference type="Proteomes" id="UP000175378">
    <property type="component" value="Genome"/>
</dbReference>
<dbReference type="GO" id="GO:0030430">
    <property type="term" value="C:host cell cytoplasm"/>
    <property type="evidence" value="ECO:0007669"/>
    <property type="project" value="UniProtKB-SubCell"/>
</dbReference>
<dbReference type="GO" id="GO:0044423">
    <property type="term" value="C:virion component"/>
    <property type="evidence" value="ECO:0007669"/>
    <property type="project" value="UniProtKB-KW"/>
</dbReference>
<dbReference type="GO" id="GO:0005524">
    <property type="term" value="F:ATP binding"/>
    <property type="evidence" value="ECO:0007669"/>
    <property type="project" value="UniProtKB-KW"/>
</dbReference>
<dbReference type="GO" id="GO:0003924">
    <property type="term" value="F:GTPase activity"/>
    <property type="evidence" value="ECO:0007669"/>
    <property type="project" value="RHEA"/>
</dbReference>
<dbReference type="GO" id="GO:0004482">
    <property type="term" value="F:mRNA 5'-cap (guanine-N7-)-methyltransferase activity"/>
    <property type="evidence" value="ECO:0007669"/>
    <property type="project" value="InterPro"/>
</dbReference>
<dbReference type="GO" id="GO:0003968">
    <property type="term" value="F:RNA-directed RNA polymerase activity"/>
    <property type="evidence" value="ECO:0007669"/>
    <property type="project" value="UniProtKB-KW"/>
</dbReference>
<dbReference type="GO" id="GO:0039689">
    <property type="term" value="P:negative stranded viral RNA replication"/>
    <property type="evidence" value="ECO:0000250"/>
    <property type="project" value="UniProtKB"/>
</dbReference>
<dbReference type="InterPro" id="IPR039530">
    <property type="entry name" value="L_methyltransferase_rhabdo"/>
</dbReference>
<dbReference type="InterPro" id="IPR039736">
    <property type="entry name" value="L_poly_C"/>
</dbReference>
<dbReference type="InterPro" id="IPR048398">
    <property type="entry name" value="Methyltrans_Mon_C"/>
</dbReference>
<dbReference type="InterPro" id="IPR048397">
    <property type="entry name" value="Methyltrans_Mon_CD"/>
</dbReference>
<dbReference type="InterPro" id="IPR026890">
    <property type="entry name" value="Mononeg_mRNAcap"/>
</dbReference>
<dbReference type="InterPro" id="IPR014023">
    <property type="entry name" value="Mononeg_RNA_pol_cat"/>
</dbReference>
<dbReference type="InterPro" id="IPR025786">
    <property type="entry name" value="Mononega_L_MeTrfase"/>
</dbReference>
<dbReference type="InterPro" id="IPR017234">
    <property type="entry name" value="RNA-dir_pol_rhabdovirus"/>
</dbReference>
<dbReference type="NCBIfam" id="TIGR04198">
    <property type="entry name" value="paramyx_RNAcap"/>
    <property type="match status" value="1"/>
</dbReference>
<dbReference type="Pfam" id="PF21080">
    <property type="entry name" value="Methyltrans_Mon_1st"/>
    <property type="match status" value="1"/>
</dbReference>
<dbReference type="Pfam" id="PF14314">
    <property type="entry name" value="Methyltrans_Mon_2nd"/>
    <property type="match status" value="1"/>
</dbReference>
<dbReference type="Pfam" id="PF21081">
    <property type="entry name" value="Methyltrans_Mon_3rd"/>
    <property type="match status" value="1"/>
</dbReference>
<dbReference type="Pfam" id="PF14318">
    <property type="entry name" value="Mononeg_mRNAcap"/>
    <property type="match status" value="1"/>
</dbReference>
<dbReference type="Pfam" id="PF00946">
    <property type="entry name" value="Mononeg_RNA_pol"/>
    <property type="match status" value="1"/>
</dbReference>
<dbReference type="PIRSF" id="PIRSF037546">
    <property type="entry name" value="RNA_pol_RhabdoV_sub"/>
    <property type="match status" value="1"/>
</dbReference>
<dbReference type="PROSITE" id="PS50526">
    <property type="entry name" value="RDRP_SSRNA_NEG_NONSEG"/>
    <property type="match status" value="1"/>
</dbReference>
<dbReference type="PROSITE" id="PS51590">
    <property type="entry name" value="SAM_MT_MNV_L"/>
    <property type="match status" value="1"/>
</dbReference>
<reference key="1">
    <citation type="journal article" date="1990" name="Virology">
        <title>Molecular cloning and complete nucleotide sequence of the attenuated rabies virus SAD B19.</title>
        <authorList>
            <person name="Conzelmann K.-K."/>
            <person name="Cox J.H."/>
            <person name="Schneider L.G."/>
            <person name="Thiel H.-J."/>
        </authorList>
    </citation>
    <scope>NUCLEOTIDE SEQUENCE [GENOMIC RNA]</scope>
</reference>
<reference key="2">
    <citation type="submission" date="2004-04" db="EMBL/GenBank/DDBJ databases">
        <title>Analysis of the whole sequence of rabies virus vaccine strain SRV9.</title>
        <authorList>
            <person name="Wang T."/>
            <person name="Zhang S."/>
            <person name="Hu R."/>
        </authorList>
    </citation>
    <scope>NUCLEOTIDE SEQUENCE [GENOMIC RNA]</scope>
    <source>
        <strain>SRV9</strain>
    </source>
</reference>
<reference key="3">
    <citation type="submission" date="2007-01" db="EMBL/GenBank/DDBJ databases">
        <title>Complete nucleotide sequencing of SAD derivatives of attenuated rabies virus vaccine strains.</title>
        <authorList>
            <person name="Geue L."/>
            <person name="Schares S."/>
            <person name="Schnick C."/>
            <person name="Kliemt J."/>
            <person name="Beckert A."/>
            <person name="Hoffmann B."/>
            <person name="Freuling C."/>
            <person name="Marston D."/>
            <person name="McElhinney L."/>
            <person name="Fooks A."/>
            <person name="Zanoni R."/>
            <person name="Peterhans E."/>
            <person name="Cox J."/>
            <person name="Mueller T."/>
        </authorList>
    </citation>
    <scope>NUCLEOTIDE SEQUENCE [GENOMIC RNA]</scope>
    <source>
        <strain>Isolate SAD Bern</strain>
        <strain>Isolate SAD Bern original var 1</strain>
        <strain>Isolate SAD Bern original var 2</strain>
        <strain>Isolate SAD Bern original var 3</strain>
        <strain>Isolate SAD Bern original var 4</strain>
        <strain>Isolate SAD Bern original var 5</strain>
        <strain>Isolate SAD P5/88</strain>
        <strain>Isolate SAD VA1</strain>
        <strain>Isolate SAD1-3670 var 1</strain>
        <strain>Isolate SAD1-3670 var 2</strain>
        <strain>Isolate SAG 2</strain>
    </source>
</reference>
<reference key="4">
    <citation type="journal article" date="1995" name="Virology">
        <title>Polymerase activity of in vitro mutated rabies virus L protein.</title>
        <authorList>
            <person name="Schnell M.J."/>
            <person name="Conzelmann K.K."/>
        </authorList>
    </citation>
    <scope>MUTAGENESIS OF LEU-725; ALA-726; GLN-727; GLY-728; ASP-729; ASN-730; GLN-731; VAL-732 AND LEU-733</scope>
</reference>
<organismHost>
    <name type="scientific">Homo sapiens</name>
    <name type="common">Human</name>
    <dbReference type="NCBI Taxonomy" id="9606"/>
</organismHost>
<organismHost>
    <name type="scientific">Mammalia</name>
    <dbReference type="NCBI Taxonomy" id="40674"/>
</organismHost>
<keyword id="KW-0002">3D-structure</keyword>
<keyword id="KW-0067">ATP-binding</keyword>
<keyword id="KW-1035">Host cytoplasm</keyword>
<keyword id="KW-0378">Hydrolase</keyword>
<keyword id="KW-0489">Methyltransferase</keyword>
<keyword id="KW-0506">mRNA capping</keyword>
<keyword id="KW-0507">mRNA processing</keyword>
<keyword id="KW-0511">Multifunctional enzyme</keyword>
<keyword id="KW-0547">Nucleotide-binding</keyword>
<keyword id="KW-0548">Nucleotidyltransferase</keyword>
<keyword id="KW-0696">RNA-directed RNA polymerase</keyword>
<keyword id="KW-0949">S-adenosyl-L-methionine</keyword>
<keyword id="KW-0808">Transferase</keyword>
<keyword id="KW-0693">Viral RNA replication</keyword>
<keyword id="KW-0946">Virion</keyword>
<sequence>MLDPGEVYDDPIDPIELEAEPRGTPIVPNILRNSDYNLNSPLIEDPARLMLEWLKTGNRPYRMTLTDNCSRSFRVLKDYFKKVDLGSLKVGGMAAQSMISLWLYGAHSESNRSRRCITDLAHFYSKSSPIEKLLNLTLGNRGLRIPPEGVLSCLERVDYDNAFGRYLANTYSSYLFFHVITLYMNALDWDEEKTILALWKDLTSVDIGKDLVKFKDQIWGLLIVTKDFVYSQSSNCLFDRNYTLMLKDLFLSRFNSLMVLLSPPEPRYSDDLISQLCQLYIAGDQVLSMCGNSGYEVIKILEPYVVNSLVQRAEKFRPLIHSLGDFPVFIKDKVSQLEETFGPCARRFFRALDQFDNIHDLVFVFGCYRHWGHPYIDYRKGLSKLYDQVHLKKMIDKSYQECLASDLARRILRWGFDKYSKWYLDSRFLARDHPLTPYIKTQTWPPKHIVDLVGDTWHKLPITQIFEIPESMDPSEILDDKSHSFTRTRLASWLSENRGGPVPSEKVIITALSKPPVNPREFLRSIDLGGLPDEDLIIGLKPKERELKIEGRFFALMSWNLRLYFVITEKLLANYILPLFDALTMTDNLNKVFKKLIDRVTGQGLLDYSRVTYAFHLDYEKWNNHQRLESTEDVFSVLDQVFGLKRVFSRTHEFFQKAWIYYSDRSDLIGLREDQIYCLDASNGPTCWNGQDGGLEGLRQKGWSLVSLLMIDRESQIRNTRTKILAQGDNQVLCPTYMLSPGLSQEGLLYELERISRNALSIYRAVEEGASKLGLIIKKEETMCSYDFLIYGKTPLFRGNILVPESKRWARVSCVSNDQIVNLANIMSTVSTNALTVAQHSQSLIKPMRDFLLMSVQAVFHYLLFSPILKGRVYKILSAEGESFLLAMSRIIYLDPSLGGISGMSLGRFHIRQFSDPVSEGLSFWREIWLSSQESWIHALCQEAGNPDLGERTLESFTRLLEDPTTLNIRGGASPTILLKDAIRKALYDEVDKVENSEFREAILLSKTHRDNFILFLISVEPLFPRFLSELFSSSFLGIPESIIGLIQNSRTIRRQFRKSLSKTLEESFYNSEIHGISRMTQTPQRVGGVWPCSSERADLLREISWGRKVVGTTVPHPSEMLGLLPKSSISCTCGATGGGNPRVSVSVLPSFDQSFFSRGPLKGYLGSSTSMSTQLFHAWEKVTNVHVVKRALSLKESINWFITRDSNLAQALIRNIMSLTGPDFPLEEAPVFKRTGSALHRFKSARYSEGGYSSVCPNLLSHISVSTDTMSDLTQDGKNYDFMFQPLMLYAQTWTSELVQRDTRLRDSTFHWHLRCNRCVRPIDDVTLETSQIFEFPDVSKRISRMVSGAVPHFQRLPDIRLRPGDFESLSGREKSHHIGSAQGLLYSILVAIHDSGYNDGTIFPVNIYGKVSPRDYLRGLARGVLIGSSICFLTRMTNININRPLELVSGVISYILLRLDNHPSLYIMLREPSLRGEIFSIPQKIPAAYPTTMKEGNRSILCYLQHVLRYEREIITASPENDWLWIFSDFRSAKMTYLSLITYQSHLLLQRVERNLSKSMRDNLRQLSSLMRQVLGGHGEDTLESDDNIQRLLKDSLRRTRWVDQEVRHAARTMTGDYSPNKKVSRKVGCSEWVCSAQQVAVSTSANPAPVSELDIRALSKRFQNPLISGLRVVQWATGAHYKLKPILDDLNVFPSLCLVVGDGSGGISRAVLNMFPDAKLVFNSLLEVNDLMASGTHPLPPSAIMRGGNDIVSRVIDLDSIWEKPSDLRNLATWKYFQSVQKQVNMSYDLIICDAEVTDIASINRITLLMSDFALSIDGPLYLVFKTYGTMLVNPNYKAIQHLSRAFPSVTGFITQVTSSFSSELYLRFSKRGKFFRDAEYLTSSTLREMSLVLFNCSSPKSEMQRARSLNYQDLVRGFPEEIISNPYNEMIITLIDSDVESFLVHKMVDDLELQRGTLSKVAIIIAIMIVFSNRVFNVSKPLTDPSFYPPSDPKILRHFNICCSTMMYLSTALGDVPSFARLHDLYNRPITYYFRKQVIRGNVYLSWSWSNDTSVFKRVACNSSLSLSSHWIRLIYKIVKTTRLVGSIKDLSREVERHLHRYNRWITLEDIRSRSSLLDYSCL</sequence>
<feature type="chain" id="PRO_0000222841" description="Large structural protein">
    <location>
        <begin position="1"/>
        <end position="2127"/>
    </location>
</feature>
<feature type="domain" description="RdRp catalytic" evidence="5">
    <location>
        <begin position="611"/>
        <end position="799"/>
    </location>
</feature>
<feature type="domain" description="Mononegavirus-type SAM-dependent 2'-O-MTase" evidence="6">
    <location>
        <begin position="1674"/>
        <end position="1871"/>
    </location>
</feature>
<feature type="region of interest" description="Interaction with P protein" evidence="1">
    <location>
        <begin position="1562"/>
        <end position="2127"/>
    </location>
</feature>
<feature type="binding site" evidence="4">
    <location>
        <begin position="1701"/>
        <end position="1710"/>
    </location>
    <ligand>
        <name>ATP</name>
        <dbReference type="ChEBI" id="CHEBI:30616"/>
    </ligand>
</feature>
<feature type="sequence variant" description="In strain: Isolate SAD1-3670 var 1 and Isolate SAD1-3670 var 2.">
    <original>I</original>
    <variation>T</variation>
    <location>
        <position position="26"/>
    </location>
</feature>
<feature type="sequence variant" description="In strain: Isolate SAD1-3670 var 1 and Isolate SAD1-3670 var 2.">
    <original>F</original>
    <variation>Y</variation>
    <location>
        <position position="365"/>
    </location>
</feature>
<feature type="sequence variant" description="In strain: Isolate SAD1-3670 var 1 and Isolate SAD1-3670 var 2.">
    <original>L</original>
    <variation>I</variation>
    <location>
        <position position="391"/>
    </location>
</feature>
<feature type="sequence variant" description="In strain: SRV9, Isolate SAD1-3670 var 1, Isolate SAD1-3670 var 2, Isolate SAD Bern, Isolate SAD Bern original var 1, Isolate SAD Bern original var 2, Isolate SAD Bern original var 3, Isolate SAD Bern original var 4, Isolate SAD Bern original var 5, Isolate SAD P5/88, Isolate SAD VA1 and Isolate SAG 2.">
    <original>M</original>
    <variation>V</variation>
    <location>
        <position position="394"/>
    </location>
</feature>
<feature type="sequence variant" description="In strain: Isolate SAD1-3670 var 1 and Isolate SAD1-3670 var 2.">
    <original>R</original>
    <variation>K</variation>
    <location>
        <position position="524"/>
    </location>
</feature>
<feature type="sequence variant" description="In strain: Isolate SAD1-3670 var 1 and Isolate SAD1-3670 var 2.">
    <original>I</original>
    <variation>V</variation>
    <location>
        <position position="901"/>
    </location>
</feature>
<feature type="sequence variant" description="In strain: Isolate SAD1-3670 var 1 and Isolate SAD1-3670 var 2.">
    <original>Q</original>
    <variation>H</variation>
    <location>
        <position position="933"/>
    </location>
</feature>
<feature type="sequence variant" description="In strain: Isolate SAD1-3670 var 1 and Isolate SAD1-3670 var 2.">
    <original>I</original>
    <variation>T</variation>
    <location>
        <position position="1018"/>
    </location>
</feature>
<feature type="sequence variant" description="In strain: SRV9.">
    <original>L</original>
    <variation>Q</variation>
    <location>
        <position position="1100"/>
    </location>
</feature>
<feature type="sequence variant" description="In strain: Isolate SAD1-3670 var 1 and Isolate SAD1-3670 var 2.">
    <original>A</original>
    <variation>T</variation>
    <location>
        <position position="1212"/>
    </location>
</feature>
<feature type="sequence variant" description="In strain: Isolate SAD1-3670 var 1 and Isolate SAD1-3670 var 2.">
    <original>V</original>
    <variation>I</variation>
    <location>
        <position position="1450"/>
    </location>
</feature>
<feature type="sequence variant" description="In strain: Isolate SAD1-3670 var 1 and Isolate SAD1-3670 var 2.">
    <original>I</original>
    <variation>V</variation>
    <location>
        <position position="1516"/>
    </location>
</feature>
<feature type="sequence variant" description="In strain: Isolate SAD1-3670 var 1 and Isolate SAD1-3670 var 2.">
    <original>S</original>
    <variation>T</variation>
    <location>
        <position position="1541"/>
    </location>
</feature>
<feature type="sequence variant" description="In strain: Isolate SAD1-3670 var 1 and Isolate SAD1-3670 var 2.">
    <original>L</original>
    <variation>F</variation>
    <location>
        <position position="1761"/>
    </location>
</feature>
<feature type="sequence variant" description="In strain: Isolate SAD1-3670 var 1 and Isolate SAD1-3670 var 2.">
    <original>S</original>
    <variation>L</variation>
    <location>
        <position position="1990"/>
    </location>
</feature>
<feature type="sequence variant" description="In strain: Isolate SAD1-3670 var 1 and Isolate SAD1-3670 var 2.">
    <original>R</original>
    <variation>G</variation>
    <location>
        <position position="2097"/>
    </location>
</feature>
<feature type="mutagenesis site" description="Complete loss of polymerase activity." evidence="7">
    <original>L</original>
    <variation>I</variation>
    <variation>M</variation>
    <location>
        <position position="725"/>
    </location>
</feature>
<feature type="mutagenesis site" description="Complete loss of polymerase activity." evidence="7">
    <original>A</original>
    <variation>G</variation>
    <variation>S</variation>
    <variation>V</variation>
    <location>
        <position position="726"/>
    </location>
</feature>
<feature type="mutagenesis site" description="Complete loss of polymerase activity." evidence="7">
    <original>Q</original>
    <variation>E</variation>
    <variation>N</variation>
    <location>
        <position position="727"/>
    </location>
</feature>
<feature type="mutagenesis site" description="Complete loss of polymerase activity.">
    <original>GDN</original>
    <variation>SDD</variation>
    <location>
        <begin position="728"/>
        <end position="730"/>
    </location>
</feature>
<feature type="mutagenesis site" description="Complete loss of polymerase activity." evidence="7">
    <original>G</original>
    <variation>A</variation>
    <location>
        <position position="728"/>
    </location>
</feature>
<feature type="mutagenesis site" description="Complete loss of polymerase activity." evidence="7">
    <original>D</original>
    <variation>E</variation>
    <variation>N</variation>
    <location>
        <position position="729"/>
    </location>
</feature>
<feature type="mutagenesis site" description="Complete loss of polymerase activity." evidence="7">
    <original>N</original>
    <variation>A</variation>
    <variation>D</variation>
    <variation>E</variation>
    <variation>Q</variation>
    <location>
        <position position="730"/>
    </location>
</feature>
<feature type="mutagenesis site" description="Complete loss of polymerase activity." evidence="7">
    <original>Q</original>
    <variation>E</variation>
    <variation>N</variation>
    <location>
        <position position="731"/>
    </location>
</feature>
<feature type="mutagenesis site" description="Partial loss of polymerase activity." evidence="7">
    <original>V</original>
    <variation>A</variation>
    <location>
        <position position="732"/>
    </location>
</feature>
<feature type="mutagenesis site" description="Complete loss of polymerase activity." evidence="7">
    <original>V</original>
    <variation>S</variation>
    <variation>T</variation>
    <location>
        <position position="732"/>
    </location>
</feature>
<feature type="mutagenesis site" description="No effect on polymerase activity." evidence="7">
    <original>L</original>
    <variation>I</variation>
    <location>
        <position position="733"/>
    </location>
</feature>
<feature type="mutagenesis site" description="Partial loss of polymerase activity." evidence="7">
    <original>L</original>
    <variation>N</variation>
    <location>
        <position position="733"/>
    </location>
</feature>
<feature type="mutagenesis site" description="Partial loss of polymerase activity." evidence="7">
    <original>L</original>
    <variation>S</variation>
    <location>
        <position position="733"/>
    </location>
</feature>
<feature type="helix" evidence="9">
    <location>
        <begin position="45"/>
        <end position="55"/>
    </location>
</feature>
<feature type="strand" evidence="9">
    <location>
        <begin position="56"/>
        <end position="58"/>
    </location>
</feature>
<feature type="helix" evidence="9">
    <location>
        <begin position="67"/>
        <end position="79"/>
    </location>
</feature>
<feature type="turn" evidence="9">
    <location>
        <begin position="91"/>
        <end position="93"/>
    </location>
</feature>
<feature type="helix" evidence="9">
    <location>
        <begin position="94"/>
        <end position="107"/>
    </location>
</feature>
<feature type="helix" evidence="9">
    <location>
        <begin position="113"/>
        <end position="126"/>
    </location>
</feature>
<feature type="helix" evidence="9">
    <location>
        <begin position="127"/>
        <end position="130"/>
    </location>
</feature>
<feature type="helix" evidence="9">
    <location>
        <begin position="131"/>
        <end position="141"/>
    </location>
</feature>
<feature type="helix" evidence="9">
    <location>
        <begin position="150"/>
        <end position="155"/>
    </location>
</feature>
<feature type="strand" evidence="9">
    <location>
        <begin position="159"/>
        <end position="161"/>
    </location>
</feature>
<feature type="helix" evidence="9">
    <location>
        <begin position="162"/>
        <end position="185"/>
    </location>
</feature>
<feature type="helix" evidence="9">
    <location>
        <begin position="189"/>
        <end position="198"/>
    </location>
</feature>
<feature type="strand" evidence="9">
    <location>
        <begin position="201"/>
        <end position="206"/>
    </location>
</feature>
<feature type="turn" evidence="9">
    <location>
        <begin position="207"/>
        <end position="210"/>
    </location>
</feature>
<feature type="strand" evidence="9">
    <location>
        <begin position="211"/>
        <end position="216"/>
    </location>
</feature>
<feature type="turn" evidence="9">
    <location>
        <begin position="217"/>
        <end position="219"/>
    </location>
</feature>
<feature type="strand" evidence="9">
    <location>
        <begin position="220"/>
        <end position="222"/>
    </location>
</feature>
<feature type="strand" evidence="9">
    <location>
        <begin position="229"/>
        <end position="231"/>
    </location>
</feature>
<feature type="turn" evidence="9">
    <location>
        <begin position="232"/>
        <end position="235"/>
    </location>
</feature>
<feature type="strand" evidence="9">
    <location>
        <begin position="236"/>
        <end position="238"/>
    </location>
</feature>
<feature type="helix" evidence="9">
    <location>
        <begin position="240"/>
        <end position="260"/>
    </location>
</feature>
<feature type="strand" evidence="9">
    <location>
        <begin position="264"/>
        <end position="268"/>
    </location>
</feature>
<feature type="helix" evidence="9">
    <location>
        <begin position="271"/>
        <end position="290"/>
    </location>
</feature>
<feature type="helix" evidence="9">
    <location>
        <begin position="292"/>
        <end position="295"/>
    </location>
</feature>
<feature type="helix" evidence="9">
    <location>
        <begin position="296"/>
        <end position="313"/>
    </location>
</feature>
<feature type="helix" evidence="9">
    <location>
        <begin position="326"/>
        <end position="339"/>
    </location>
</feature>
<feature type="turn" evidence="9">
    <location>
        <begin position="340"/>
        <end position="343"/>
    </location>
</feature>
<feature type="helix" evidence="9">
    <location>
        <begin position="344"/>
        <end position="353"/>
    </location>
</feature>
<feature type="helix" evidence="9">
    <location>
        <begin position="359"/>
        <end position="366"/>
    </location>
</feature>
<feature type="strand" evidence="9">
    <location>
        <begin position="368"/>
        <end position="371"/>
    </location>
</feature>
<feature type="helix" evidence="9">
    <location>
        <begin position="378"/>
        <end position="390"/>
    </location>
</feature>
<feature type="helix" evidence="9">
    <location>
        <begin position="398"/>
        <end position="418"/>
    </location>
</feature>
<feature type="strand" evidence="9">
    <location>
        <begin position="419"/>
        <end position="421"/>
    </location>
</feature>
<feature type="helix" evidence="9">
    <location>
        <begin position="426"/>
        <end position="428"/>
    </location>
</feature>
<feature type="strand" evidence="9">
    <location>
        <begin position="431"/>
        <end position="433"/>
    </location>
</feature>
<feature type="turn" evidence="9">
    <location>
        <begin position="434"/>
        <end position="436"/>
    </location>
</feature>
<feature type="helix" evidence="9">
    <location>
        <begin position="437"/>
        <end position="440"/>
    </location>
</feature>
<feature type="helix" evidence="9">
    <location>
        <begin position="447"/>
        <end position="452"/>
    </location>
</feature>
<feature type="turn" evidence="9">
    <location>
        <begin position="453"/>
        <end position="455"/>
    </location>
</feature>
<feature type="helix" evidence="9">
    <location>
        <begin position="457"/>
        <end position="459"/>
    </location>
</feature>
<feature type="helix" evidence="9">
    <location>
        <begin position="474"/>
        <end position="476"/>
    </location>
</feature>
<feature type="helix" evidence="9">
    <location>
        <begin position="487"/>
        <end position="496"/>
    </location>
</feature>
<feature type="helix" evidence="9">
    <location>
        <begin position="507"/>
        <end position="513"/>
    </location>
</feature>
<feature type="helix" evidence="9">
    <location>
        <begin position="519"/>
        <end position="527"/>
    </location>
</feature>
<feature type="strand" evidence="9">
    <location>
        <begin position="537"/>
        <end position="542"/>
    </location>
</feature>
<feature type="strand" evidence="9">
    <location>
        <begin position="553"/>
        <end position="557"/>
    </location>
</feature>
<feature type="helix" evidence="9">
    <location>
        <begin position="559"/>
        <end position="575"/>
    </location>
</feature>
<feature type="helix" evidence="9">
    <location>
        <begin position="577"/>
        <end position="579"/>
    </location>
</feature>
<feature type="strand" evidence="9">
    <location>
        <begin position="581"/>
        <end position="583"/>
    </location>
</feature>
<feature type="helix" evidence="9">
    <location>
        <begin position="589"/>
        <end position="598"/>
    </location>
</feature>
<feature type="turn" evidence="9">
    <location>
        <begin position="599"/>
        <end position="602"/>
    </location>
</feature>
<feature type="strand" evidence="9">
    <location>
        <begin position="606"/>
        <end position="609"/>
    </location>
</feature>
<feature type="strand" evidence="9">
    <location>
        <begin position="614"/>
        <end position="618"/>
    </location>
</feature>
<feature type="helix" evidence="9">
    <location>
        <begin position="622"/>
        <end position="625"/>
    </location>
</feature>
<feature type="turn" evidence="9">
    <location>
        <begin position="628"/>
        <end position="632"/>
    </location>
</feature>
<feature type="helix" evidence="9">
    <location>
        <begin position="633"/>
        <end position="641"/>
    </location>
</feature>
<feature type="turn" evidence="9">
    <location>
        <begin position="647"/>
        <end position="649"/>
    </location>
</feature>
<feature type="helix" evidence="9">
    <location>
        <begin position="650"/>
        <end position="657"/>
    </location>
</feature>
<feature type="strand" evidence="9">
    <location>
        <begin position="659"/>
        <end position="662"/>
    </location>
</feature>
<feature type="strand" evidence="9">
    <location>
        <begin position="673"/>
        <end position="675"/>
    </location>
</feature>
<feature type="helix" evidence="9">
    <location>
        <begin position="700"/>
        <end position="718"/>
    </location>
</feature>
<feature type="strand" evidence="9">
    <location>
        <begin position="720"/>
        <end position="737"/>
    </location>
</feature>
<feature type="helix" evidence="9">
    <location>
        <begin position="745"/>
        <end position="772"/>
    </location>
</feature>
<feature type="turn" evidence="9">
    <location>
        <begin position="779"/>
        <end position="781"/>
    </location>
</feature>
<feature type="strand" evidence="9">
    <location>
        <begin position="783"/>
        <end position="787"/>
    </location>
</feature>
<feature type="strand" evidence="9">
    <location>
        <begin position="789"/>
        <end position="791"/>
    </location>
</feature>
<feature type="strand" evidence="9">
    <location>
        <begin position="794"/>
        <end position="797"/>
    </location>
</feature>
<feature type="helix" evidence="9">
    <location>
        <begin position="806"/>
        <end position="810"/>
    </location>
</feature>
<feature type="turn" evidence="9">
    <location>
        <begin position="811"/>
        <end position="813"/>
    </location>
</feature>
<feature type="helix" evidence="9">
    <location>
        <begin position="823"/>
        <end position="839"/>
    </location>
</feature>
<feature type="helix" evidence="9">
    <location>
        <begin position="845"/>
        <end position="864"/>
    </location>
</feature>
<feature type="turn" evidence="9">
    <location>
        <begin position="867"/>
        <end position="870"/>
    </location>
</feature>
<feature type="strand" evidence="9">
    <location>
        <begin position="875"/>
        <end position="878"/>
    </location>
</feature>
<feature type="helix" evidence="9">
    <location>
        <begin position="883"/>
        <end position="892"/>
    </location>
</feature>
<feature type="strand" evidence="9">
    <location>
        <begin position="896"/>
        <end position="899"/>
    </location>
</feature>
<feature type="helix" evidence="9">
    <location>
        <begin position="906"/>
        <end position="908"/>
    </location>
</feature>
<feature type="helix" evidence="9">
    <location>
        <begin position="917"/>
        <end position="930"/>
    </location>
</feature>
<feature type="helix" evidence="9">
    <location>
        <begin position="936"/>
        <end position="945"/>
    </location>
</feature>
<feature type="turn" evidence="9">
    <location>
        <begin position="954"/>
        <end position="958"/>
    </location>
</feature>
<feature type="helix" evidence="9">
    <location>
        <begin position="959"/>
        <end position="962"/>
    </location>
</feature>
<feature type="helix" evidence="9">
    <location>
        <begin position="975"/>
        <end position="989"/>
    </location>
</feature>
<feature type="helix" evidence="9">
    <location>
        <begin position="991"/>
        <end position="993"/>
    </location>
</feature>
<feature type="helix" evidence="9">
    <location>
        <begin position="997"/>
        <end position="1018"/>
    </location>
</feature>
<feature type="strand" evidence="9">
    <location>
        <begin position="1020"/>
        <end position="1022"/>
    </location>
</feature>
<feature type="helix" evidence="9">
    <location>
        <begin position="1025"/>
        <end position="1034"/>
    </location>
</feature>
<feature type="helix" evidence="9">
    <location>
        <begin position="1038"/>
        <end position="1046"/>
    </location>
</feature>
<feature type="helix" evidence="9">
    <location>
        <begin position="1050"/>
        <end position="1056"/>
    </location>
</feature>
<feature type="helix" evidence="9">
    <location>
        <begin position="1059"/>
        <end position="1080"/>
    </location>
</feature>
<feature type="helix" evidence="9">
    <location>
        <begin position="1094"/>
        <end position="1106"/>
    </location>
</feature>
<feature type="turn" evidence="9">
    <location>
        <begin position="1118"/>
        <end position="1120"/>
    </location>
</feature>
<feature type="strand" evidence="9">
    <location>
        <begin position="1127"/>
        <end position="1131"/>
    </location>
</feature>
<feature type="strand" evidence="9">
    <location>
        <begin position="1144"/>
        <end position="1148"/>
    </location>
</feature>
<feature type="strand" evidence="9">
    <location>
        <begin position="1154"/>
        <end position="1157"/>
    </location>
</feature>
<feature type="strand" evidence="9">
    <location>
        <begin position="1176"/>
        <end position="1178"/>
    </location>
</feature>
<feature type="helix" evidence="9">
    <location>
        <begin position="1188"/>
        <end position="1197"/>
    </location>
</feature>
<feature type="turn" evidence="9">
    <location>
        <begin position="1200"/>
        <end position="1202"/>
    </location>
</feature>
<feature type="strand" evidence="9">
    <location>
        <begin position="1205"/>
        <end position="1207"/>
    </location>
</feature>
<feature type="helix" evidence="9">
    <location>
        <begin position="1208"/>
        <end position="1219"/>
    </location>
</feature>
<feature type="turn" evidence="9">
    <location>
        <begin position="1245"/>
        <end position="1248"/>
    </location>
</feature>
<feature type="helix" evidence="9">
    <location>
        <begin position="1260"/>
        <end position="1263"/>
    </location>
</feature>
<feature type="strand" evidence="9">
    <location>
        <begin position="1264"/>
        <end position="1267"/>
    </location>
</feature>
<feature type="helix" evidence="9">
    <location>
        <begin position="1269"/>
        <end position="1276"/>
    </location>
</feature>
<feature type="helix" evidence="9">
    <location>
        <begin position="1286"/>
        <end position="1301"/>
    </location>
</feature>
<feature type="strand" evidence="9">
    <location>
        <begin position="1311"/>
        <end position="1313"/>
    </location>
</feature>
<feature type="turn" evidence="9">
    <location>
        <begin position="1341"/>
        <end position="1343"/>
    </location>
</feature>
<feature type="strand" evidence="9">
    <location>
        <begin position="1346"/>
        <end position="1348"/>
    </location>
</feature>
<feature type="helix" evidence="9">
    <location>
        <begin position="1373"/>
        <end position="1393"/>
    </location>
</feature>
<feature type="helix" evidence="9">
    <location>
        <begin position="1397"/>
        <end position="1400"/>
    </location>
</feature>
<feature type="strand" evidence="9">
    <location>
        <begin position="1407"/>
        <end position="1413"/>
    </location>
</feature>
<feature type="helix" evidence="9">
    <location>
        <begin position="1415"/>
        <end position="1436"/>
    </location>
</feature>
<feature type="helix" evidence="9">
    <location>
        <begin position="1442"/>
        <end position="1444"/>
    </location>
</feature>
<feature type="helix" evidence="9">
    <location>
        <begin position="1446"/>
        <end position="1462"/>
    </location>
</feature>
<feature type="helix" evidence="9">
    <location>
        <begin position="1466"/>
        <end position="1472"/>
    </location>
</feature>
<feature type="helix" evidence="9">
    <location>
        <begin position="1474"/>
        <end position="1481"/>
    </location>
</feature>
<feature type="helix" evidence="9">
    <location>
        <begin position="1495"/>
        <end position="1509"/>
    </location>
</feature>
<feature type="turn" evidence="9">
    <location>
        <begin position="1510"/>
        <end position="1512"/>
    </location>
</feature>
<feature type="turn" evidence="9">
    <location>
        <begin position="1514"/>
        <end position="1518"/>
    </location>
</feature>
<feature type="strand" evidence="9">
    <location>
        <begin position="1530"/>
        <end position="1532"/>
    </location>
</feature>
<feature type="helix" evidence="9">
    <location>
        <begin position="1535"/>
        <end position="1551"/>
    </location>
</feature>
<feature type="helix" evidence="9">
    <location>
        <begin position="1560"/>
        <end position="1576"/>
    </location>
</feature>
<feature type="strand" evidence="9">
    <location>
        <begin position="1579"/>
        <end position="1581"/>
    </location>
</feature>
<feature type="helix" evidence="9">
    <location>
        <begin position="1588"/>
        <end position="1594"/>
    </location>
</feature>
<feature type="turn" evidence="9">
    <location>
        <begin position="1595"/>
        <end position="1598"/>
    </location>
</feature>
<feature type="helix" evidence="9">
    <location>
        <begin position="1599"/>
        <end position="1601"/>
    </location>
</feature>
<feature type="helix" evidence="9">
    <location>
        <begin position="1610"/>
        <end position="1613"/>
    </location>
</feature>
<feature type="turn" evidence="9">
    <location>
        <begin position="1614"/>
        <end position="1618"/>
    </location>
</feature>
<feature type="strand" evidence="9">
    <location>
        <begin position="1640"/>
        <end position="1643"/>
    </location>
</feature>
<feature type="strand" evidence="9">
    <location>
        <begin position="1647"/>
        <end position="1650"/>
    </location>
</feature>
<feature type="helix" evidence="9">
    <location>
        <begin position="1656"/>
        <end position="1661"/>
    </location>
</feature>
<feature type="helix" evidence="9">
    <location>
        <begin position="1670"/>
        <end position="1673"/>
    </location>
</feature>
<feature type="strand" evidence="9">
    <location>
        <begin position="1678"/>
        <end position="1681"/>
    </location>
</feature>
<feature type="helix" evidence="9">
    <location>
        <begin position="1683"/>
        <end position="1692"/>
    </location>
</feature>
<feature type="strand" evidence="9">
    <location>
        <begin position="1698"/>
        <end position="1704"/>
    </location>
</feature>
<feature type="strand" evidence="9">
    <location>
        <begin position="1706"/>
        <end position="1708"/>
    </location>
</feature>
<feature type="helix" evidence="9">
    <location>
        <begin position="1709"/>
        <end position="1717"/>
    </location>
</feature>
<feature type="strand" evidence="9">
    <location>
        <begin position="1722"/>
        <end position="1726"/>
    </location>
</feature>
<feature type="strand" evidence="9">
    <location>
        <begin position="1737"/>
        <end position="1739"/>
    </location>
</feature>
<feature type="helix" evidence="9">
    <location>
        <begin position="1745"/>
        <end position="1750"/>
    </location>
</feature>
<feature type="helix" evidence="9">
    <location>
        <begin position="1752"/>
        <end position="1756"/>
    </location>
</feature>
<feature type="helix" evidence="9">
    <location>
        <begin position="1775"/>
        <end position="1786"/>
    </location>
</feature>
<feature type="strand" evidence="9">
    <location>
        <begin position="1793"/>
        <end position="1796"/>
    </location>
</feature>
<feature type="helix" evidence="9">
    <location>
        <begin position="1804"/>
        <end position="1818"/>
    </location>
</feature>
<feature type="strand" evidence="9">
    <location>
        <begin position="1824"/>
        <end position="1831"/>
    </location>
</feature>
<feature type="helix" evidence="9">
    <location>
        <begin position="1832"/>
        <end position="1835"/>
    </location>
</feature>
<feature type="helix" evidence="9">
    <location>
        <begin position="1843"/>
        <end position="1846"/>
    </location>
</feature>
<feature type="strand" evidence="9">
    <location>
        <begin position="1852"/>
        <end position="1861"/>
    </location>
</feature>
<feature type="strand" evidence="9">
    <location>
        <begin position="1867"/>
        <end position="1874"/>
    </location>
</feature>
<feature type="helix" evidence="9">
    <location>
        <begin position="1888"/>
        <end position="1895"/>
    </location>
</feature>
<feature type="strand" evidence="9">
    <location>
        <begin position="1896"/>
        <end position="1901"/>
    </location>
</feature>
<feature type="helix" evidence="9">
    <location>
        <begin position="1903"/>
        <end position="1912"/>
    </location>
</feature>
<feature type="helix" evidence="9">
    <location>
        <begin position="1916"/>
        <end position="1919"/>
    </location>
</feature>
<feature type="strand" evidence="9">
    <location>
        <begin position="1924"/>
        <end position="1927"/>
    </location>
</feature>
<feature type="helix" evidence="9">
    <location>
        <begin position="1930"/>
        <end position="1940"/>
    </location>
</feature>
<feature type="helix" evidence="9">
    <location>
        <begin position="1945"/>
        <end position="1957"/>
    </location>
</feature>
<feature type="helix" evidence="9">
    <location>
        <begin position="1961"/>
        <end position="1978"/>
    </location>
</feature>
<feature type="strand" evidence="9">
    <location>
        <begin position="1988"/>
        <end position="1991"/>
    </location>
</feature>
<feature type="helix" evidence="9">
    <location>
        <begin position="1996"/>
        <end position="2017"/>
    </location>
</feature>
<feature type="helix" evidence="9">
    <location>
        <begin position="2020"/>
        <end position="2031"/>
    </location>
</feature>
<feature type="strand" evidence="9">
    <location>
        <begin position="2034"/>
        <end position="2042"/>
    </location>
</feature>
<feature type="strand" evidence="9">
    <location>
        <begin position="2044"/>
        <end position="2054"/>
    </location>
</feature>
<feature type="strand" evidence="9">
    <location>
        <begin position="2058"/>
        <end position="2064"/>
    </location>
</feature>
<feature type="helix" evidence="9">
    <location>
        <begin position="2069"/>
        <end position="2082"/>
    </location>
</feature>
<feature type="helix" evidence="9">
    <location>
        <begin position="2092"/>
        <end position="2106"/>
    </location>
</feature>
<feature type="turn" evidence="9">
    <location>
        <begin position="2113"/>
        <end position="2118"/>
    </location>
</feature>
<feature type="strand" evidence="9">
    <location>
        <begin position="2121"/>
        <end position="2125"/>
    </location>
</feature>